<dbReference type="EMBL" id="CP000561">
    <property type="protein sequence ID" value="ABO09244.1"/>
    <property type="molecule type" value="Genomic_DNA"/>
</dbReference>
<dbReference type="RefSeq" id="WP_011850502.1">
    <property type="nucleotide sequence ID" value="NC_009073.1"/>
</dbReference>
<dbReference type="PDB" id="9E6Q">
    <property type="method" value="EM"/>
    <property type="resolution" value="1.95 A"/>
    <property type="chains" value="AR=1-78"/>
</dbReference>
<dbReference type="PDB" id="9E71">
    <property type="method" value="EM"/>
    <property type="resolution" value="2.36 A"/>
    <property type="chains" value="AR=1-78"/>
</dbReference>
<dbReference type="PDB" id="9E7F">
    <property type="method" value="EM"/>
    <property type="resolution" value="2.53 A"/>
    <property type="chains" value="AR=1-78"/>
</dbReference>
<dbReference type="PDBsum" id="9E6Q"/>
<dbReference type="PDBsum" id="9E71"/>
<dbReference type="PDBsum" id="9E7F"/>
<dbReference type="EMDB" id="EMD-47578"/>
<dbReference type="EMDB" id="EMD-47628"/>
<dbReference type="EMDB" id="EMD-47668"/>
<dbReference type="SMR" id="A3MX77"/>
<dbReference type="STRING" id="410359.Pcal_1827"/>
<dbReference type="GeneID" id="4910172"/>
<dbReference type="KEGG" id="pcl:Pcal_1827"/>
<dbReference type="eggNOG" id="arCOG04175">
    <property type="taxonomic scope" value="Archaea"/>
</dbReference>
<dbReference type="HOGENOM" id="CLU_177460_0_1_2"/>
<dbReference type="OrthoDB" id="191241at2157"/>
<dbReference type="Proteomes" id="UP000001431">
    <property type="component" value="Chromosome"/>
</dbReference>
<dbReference type="GO" id="GO:1990904">
    <property type="term" value="C:ribonucleoprotein complex"/>
    <property type="evidence" value="ECO:0007669"/>
    <property type="project" value="UniProtKB-KW"/>
</dbReference>
<dbReference type="GO" id="GO:0005840">
    <property type="term" value="C:ribosome"/>
    <property type="evidence" value="ECO:0007669"/>
    <property type="project" value="UniProtKB-KW"/>
</dbReference>
<dbReference type="GO" id="GO:0070180">
    <property type="term" value="F:large ribosomal subunit rRNA binding"/>
    <property type="evidence" value="ECO:0007669"/>
    <property type="project" value="UniProtKB-UniRule"/>
</dbReference>
<dbReference type="GO" id="GO:0003735">
    <property type="term" value="F:structural constituent of ribosome"/>
    <property type="evidence" value="ECO:0007669"/>
    <property type="project" value="InterPro"/>
</dbReference>
<dbReference type="GO" id="GO:0006412">
    <property type="term" value="P:translation"/>
    <property type="evidence" value="ECO:0007669"/>
    <property type="project" value="UniProtKB-UniRule"/>
</dbReference>
<dbReference type="Gene3D" id="3.10.20.10">
    <property type="match status" value="1"/>
</dbReference>
<dbReference type="HAMAP" id="MF_00273">
    <property type="entry name" value="Ribosomal_eL20"/>
    <property type="match status" value="1"/>
</dbReference>
<dbReference type="InterPro" id="IPR028877">
    <property type="entry name" value="Ribosomal_eL20"/>
</dbReference>
<dbReference type="InterPro" id="IPR023573">
    <property type="entry name" value="Ribosomal_eL20_dom"/>
</dbReference>
<dbReference type="NCBIfam" id="NF001981">
    <property type="entry name" value="PRK00773.1-1"/>
    <property type="match status" value="1"/>
</dbReference>
<dbReference type="Pfam" id="PF01775">
    <property type="entry name" value="Ribosomal_L18A"/>
    <property type="match status" value="1"/>
</dbReference>
<dbReference type="SUPFAM" id="SSF160374">
    <property type="entry name" value="RplX-like"/>
    <property type="match status" value="1"/>
</dbReference>
<feature type="chain" id="PRO_1000003671" description="Large ribosomal subunit protein eL20">
    <location>
        <begin position="1"/>
        <end position="78"/>
    </location>
</feature>
<reference key="1">
    <citation type="submission" date="2007-02" db="EMBL/GenBank/DDBJ databases">
        <title>Complete sequence of Pyrobaculum calidifontis JCM 11548.</title>
        <authorList>
            <consortium name="US DOE Joint Genome Institute"/>
            <person name="Copeland A."/>
            <person name="Lucas S."/>
            <person name="Lapidus A."/>
            <person name="Barry K."/>
            <person name="Glavina del Rio T."/>
            <person name="Dalin E."/>
            <person name="Tice H."/>
            <person name="Pitluck S."/>
            <person name="Chain P."/>
            <person name="Malfatti S."/>
            <person name="Shin M."/>
            <person name="Vergez L."/>
            <person name="Schmutz J."/>
            <person name="Larimer F."/>
            <person name="Land M."/>
            <person name="Hauser L."/>
            <person name="Kyrpides N."/>
            <person name="Mikhailova N."/>
            <person name="Cozen A.E."/>
            <person name="Fitz-Gibbon S.T."/>
            <person name="House C.H."/>
            <person name="Saltikov C."/>
            <person name="Lowe T.M."/>
            <person name="Richardson P."/>
        </authorList>
    </citation>
    <scope>NUCLEOTIDE SEQUENCE [LARGE SCALE GENOMIC DNA]</scope>
    <source>
        <strain>DSM 21063 / JCM 11548 / VA1</strain>
    </source>
</reference>
<keyword id="KW-0002">3D-structure</keyword>
<keyword id="KW-0687">Ribonucleoprotein</keyword>
<keyword id="KW-0689">Ribosomal protein</keyword>
<keyword id="KW-0694">RNA-binding</keyword>
<keyword id="KW-0699">rRNA-binding</keyword>
<proteinExistence type="evidence at protein level"/>
<evidence type="ECO:0000255" key="1">
    <source>
        <dbReference type="HAMAP-Rule" id="MF_00273"/>
    </source>
</evidence>
<evidence type="ECO:0000305" key="2"/>
<organism>
    <name type="scientific">Pyrobaculum calidifontis (strain DSM 21063 / JCM 11548 / VA1)</name>
    <dbReference type="NCBI Taxonomy" id="410359"/>
    <lineage>
        <taxon>Archaea</taxon>
        <taxon>Thermoproteota</taxon>
        <taxon>Thermoprotei</taxon>
        <taxon>Thermoproteales</taxon>
        <taxon>Thermoproteaceae</taxon>
        <taxon>Pyrobaculum</taxon>
    </lineage>
</organism>
<protein>
    <recommendedName>
        <fullName evidence="1">Large ribosomal subunit protein eL20</fullName>
    </recommendedName>
    <alternativeName>
        <fullName evidence="2">50S ribosomal protein L18Ae</fullName>
    </alternativeName>
    <alternativeName>
        <fullName evidence="1">50S ribosomal protein L20e</fullName>
    </alternativeName>
    <alternativeName>
        <fullName evidence="1">50S ribosomal protein LX</fullName>
    </alternativeName>
</protein>
<sequence>MPKIYRVVGDTSTGMKFVVEVVGERPYDALEKVYSVLGSRHKLKRTQIRIREVSVVEPSSAKSNEAKMLMVLEKVVRY</sequence>
<comment type="subunit">
    <text evidence="1">Part of the 50S ribosomal subunit. Binds 23S rRNA.</text>
</comment>
<comment type="similarity">
    <text evidence="1">Belongs to the eukaryotic ribosomal protein eL20 family.</text>
</comment>
<name>RL18A_PYRCJ</name>
<gene>
    <name evidence="1" type="primary">rpl18a</name>
    <name evidence="1" type="synonym">rpl20e</name>
    <name evidence="1" type="synonym">rplX</name>
    <name type="ordered locus">Pcal_1827</name>
</gene>
<accession>A3MX77</accession>